<dbReference type="EC" id="5.4.2.11" evidence="1"/>
<dbReference type="EMBL" id="CP001097">
    <property type="protein sequence ID" value="ACD90970.1"/>
    <property type="molecule type" value="Genomic_DNA"/>
</dbReference>
<dbReference type="RefSeq" id="WP_012466839.1">
    <property type="nucleotide sequence ID" value="NC_010803.1"/>
</dbReference>
<dbReference type="SMR" id="B3EFK8"/>
<dbReference type="STRING" id="290315.Clim_1938"/>
<dbReference type="KEGG" id="cli:Clim_1938"/>
<dbReference type="eggNOG" id="COG0588">
    <property type="taxonomic scope" value="Bacteria"/>
</dbReference>
<dbReference type="HOGENOM" id="CLU_033323_1_1_10"/>
<dbReference type="OrthoDB" id="9782128at2"/>
<dbReference type="UniPathway" id="UPA00109">
    <property type="reaction ID" value="UER00186"/>
</dbReference>
<dbReference type="Proteomes" id="UP000008841">
    <property type="component" value="Chromosome"/>
</dbReference>
<dbReference type="GO" id="GO:0004619">
    <property type="term" value="F:phosphoglycerate mutase activity"/>
    <property type="evidence" value="ECO:0007669"/>
    <property type="project" value="UniProtKB-EC"/>
</dbReference>
<dbReference type="GO" id="GO:0006094">
    <property type="term" value="P:gluconeogenesis"/>
    <property type="evidence" value="ECO:0007669"/>
    <property type="project" value="UniProtKB-UniRule"/>
</dbReference>
<dbReference type="GO" id="GO:0006096">
    <property type="term" value="P:glycolytic process"/>
    <property type="evidence" value="ECO:0007669"/>
    <property type="project" value="UniProtKB-UniRule"/>
</dbReference>
<dbReference type="CDD" id="cd07067">
    <property type="entry name" value="HP_PGM_like"/>
    <property type="match status" value="1"/>
</dbReference>
<dbReference type="FunFam" id="3.40.50.1240:FF:000003">
    <property type="entry name" value="2,3-bisphosphoglycerate-dependent phosphoglycerate mutase"/>
    <property type="match status" value="1"/>
</dbReference>
<dbReference type="Gene3D" id="3.40.50.1240">
    <property type="entry name" value="Phosphoglycerate mutase-like"/>
    <property type="match status" value="1"/>
</dbReference>
<dbReference type="HAMAP" id="MF_01039">
    <property type="entry name" value="PGAM_GpmA"/>
    <property type="match status" value="1"/>
</dbReference>
<dbReference type="InterPro" id="IPR013078">
    <property type="entry name" value="His_Pase_superF_clade-1"/>
</dbReference>
<dbReference type="InterPro" id="IPR029033">
    <property type="entry name" value="His_PPase_superfam"/>
</dbReference>
<dbReference type="InterPro" id="IPR001345">
    <property type="entry name" value="PG/BPGM_mutase_AS"/>
</dbReference>
<dbReference type="InterPro" id="IPR005952">
    <property type="entry name" value="Phosphogly_mut1"/>
</dbReference>
<dbReference type="NCBIfam" id="TIGR01258">
    <property type="entry name" value="pgm_1"/>
    <property type="match status" value="1"/>
</dbReference>
<dbReference type="NCBIfam" id="NF010713">
    <property type="entry name" value="PRK14115.1"/>
    <property type="match status" value="1"/>
</dbReference>
<dbReference type="PANTHER" id="PTHR11931">
    <property type="entry name" value="PHOSPHOGLYCERATE MUTASE"/>
    <property type="match status" value="1"/>
</dbReference>
<dbReference type="Pfam" id="PF00300">
    <property type="entry name" value="His_Phos_1"/>
    <property type="match status" value="1"/>
</dbReference>
<dbReference type="PIRSF" id="PIRSF000709">
    <property type="entry name" value="6PFK_2-Ptase"/>
    <property type="match status" value="1"/>
</dbReference>
<dbReference type="SMART" id="SM00855">
    <property type="entry name" value="PGAM"/>
    <property type="match status" value="1"/>
</dbReference>
<dbReference type="SUPFAM" id="SSF53254">
    <property type="entry name" value="Phosphoglycerate mutase-like"/>
    <property type="match status" value="1"/>
</dbReference>
<dbReference type="PROSITE" id="PS00175">
    <property type="entry name" value="PG_MUTASE"/>
    <property type="match status" value="1"/>
</dbReference>
<feature type="chain" id="PRO_1000135932" description="2,3-bisphosphoglycerate-dependent phosphoglycerate mutase">
    <location>
        <begin position="1"/>
        <end position="247"/>
    </location>
</feature>
<feature type="active site" description="Tele-phosphohistidine intermediate" evidence="1">
    <location>
        <position position="9"/>
    </location>
</feature>
<feature type="active site" description="Proton donor/acceptor" evidence="1">
    <location>
        <position position="87"/>
    </location>
</feature>
<feature type="binding site" evidence="1">
    <location>
        <begin position="8"/>
        <end position="15"/>
    </location>
    <ligand>
        <name>substrate</name>
    </ligand>
</feature>
<feature type="binding site" evidence="1">
    <location>
        <begin position="21"/>
        <end position="22"/>
    </location>
    <ligand>
        <name>substrate</name>
    </ligand>
</feature>
<feature type="binding site" evidence="1">
    <location>
        <position position="60"/>
    </location>
    <ligand>
        <name>substrate</name>
    </ligand>
</feature>
<feature type="binding site" evidence="1">
    <location>
        <begin position="87"/>
        <end position="90"/>
    </location>
    <ligand>
        <name>substrate</name>
    </ligand>
</feature>
<feature type="binding site" evidence="1">
    <location>
        <position position="98"/>
    </location>
    <ligand>
        <name>substrate</name>
    </ligand>
</feature>
<feature type="binding site" evidence="1">
    <location>
        <begin position="114"/>
        <end position="115"/>
    </location>
    <ligand>
        <name>substrate</name>
    </ligand>
</feature>
<feature type="binding site" evidence="1">
    <location>
        <begin position="183"/>
        <end position="184"/>
    </location>
    <ligand>
        <name>substrate</name>
    </ligand>
</feature>
<feature type="site" description="Transition state stabilizer" evidence="1">
    <location>
        <position position="182"/>
    </location>
</feature>
<gene>
    <name evidence="1" type="primary">gpmA</name>
    <name type="ordered locus">Clim_1938</name>
</gene>
<accession>B3EFK8</accession>
<sequence>MIKLVLLRHGESQWNLENRFTGWHDIDLTDNGRIEASNAGRAIKEAGLTFDIAYTSVLKRAIRTLWNALDVLDLMWIPVVKSWRLNERHYGALQGLNKSETSRKYGEEQVLVWRRSYDTPPPVLDKDDERYPGTDRRYAELGEAEIPLSECLKDTVERFLPIWRDTIEPEIRKGRKVLIVAHGNSLRALVKYLDNISEEDIVGLNIPTGIPLVYELDDDLKPLKSYYLGDQEAIKQAVQAVAGQAKA</sequence>
<protein>
    <recommendedName>
        <fullName evidence="1">2,3-bisphosphoglycerate-dependent phosphoglycerate mutase</fullName>
        <shortName evidence="1">BPG-dependent PGAM</shortName>
        <shortName evidence="1">PGAM</shortName>
        <shortName evidence="1">Phosphoglyceromutase</shortName>
        <shortName evidence="1">dPGM</shortName>
        <ecNumber evidence="1">5.4.2.11</ecNumber>
    </recommendedName>
</protein>
<evidence type="ECO:0000255" key="1">
    <source>
        <dbReference type="HAMAP-Rule" id="MF_01039"/>
    </source>
</evidence>
<organism>
    <name type="scientific">Chlorobium limicola (strain DSM 245 / NBRC 103803 / 6330)</name>
    <dbReference type="NCBI Taxonomy" id="290315"/>
    <lineage>
        <taxon>Bacteria</taxon>
        <taxon>Pseudomonadati</taxon>
        <taxon>Chlorobiota</taxon>
        <taxon>Chlorobiia</taxon>
        <taxon>Chlorobiales</taxon>
        <taxon>Chlorobiaceae</taxon>
        <taxon>Chlorobium/Pelodictyon group</taxon>
        <taxon>Chlorobium</taxon>
    </lineage>
</organism>
<comment type="function">
    <text evidence="1">Catalyzes the interconversion of 2-phosphoglycerate and 3-phosphoglycerate.</text>
</comment>
<comment type="catalytic activity">
    <reaction evidence="1">
        <text>(2R)-2-phosphoglycerate = (2R)-3-phosphoglycerate</text>
        <dbReference type="Rhea" id="RHEA:15901"/>
        <dbReference type="ChEBI" id="CHEBI:58272"/>
        <dbReference type="ChEBI" id="CHEBI:58289"/>
        <dbReference type="EC" id="5.4.2.11"/>
    </reaction>
</comment>
<comment type="pathway">
    <text evidence="1">Carbohydrate degradation; glycolysis; pyruvate from D-glyceraldehyde 3-phosphate: step 3/5.</text>
</comment>
<comment type="similarity">
    <text evidence="1">Belongs to the phosphoglycerate mutase family. BPG-dependent PGAM subfamily.</text>
</comment>
<keyword id="KW-0312">Gluconeogenesis</keyword>
<keyword id="KW-0324">Glycolysis</keyword>
<keyword id="KW-0413">Isomerase</keyword>
<proteinExistence type="inferred from homology"/>
<name>GPMA_CHLL2</name>
<reference key="1">
    <citation type="submission" date="2008-05" db="EMBL/GenBank/DDBJ databases">
        <title>Complete sequence of Chlorobium limicola DSM 245.</title>
        <authorList>
            <consortium name="US DOE Joint Genome Institute"/>
            <person name="Lucas S."/>
            <person name="Copeland A."/>
            <person name="Lapidus A."/>
            <person name="Glavina del Rio T."/>
            <person name="Dalin E."/>
            <person name="Tice H."/>
            <person name="Bruce D."/>
            <person name="Goodwin L."/>
            <person name="Pitluck S."/>
            <person name="Schmutz J."/>
            <person name="Larimer F."/>
            <person name="Land M."/>
            <person name="Hauser L."/>
            <person name="Kyrpides N."/>
            <person name="Ovchinnikova G."/>
            <person name="Zhao F."/>
            <person name="Li T."/>
            <person name="Liu Z."/>
            <person name="Overmann J."/>
            <person name="Bryant D.A."/>
            <person name="Richardson P."/>
        </authorList>
    </citation>
    <scope>NUCLEOTIDE SEQUENCE [LARGE SCALE GENOMIC DNA]</scope>
    <source>
        <strain>DSM 245 / NBRC 103803 / 6330</strain>
    </source>
</reference>